<organism>
    <name type="scientific">Streptococcus pneumoniae (strain JJA)</name>
    <dbReference type="NCBI Taxonomy" id="488222"/>
    <lineage>
        <taxon>Bacteria</taxon>
        <taxon>Bacillati</taxon>
        <taxon>Bacillota</taxon>
        <taxon>Bacilli</taxon>
        <taxon>Lactobacillales</taxon>
        <taxon>Streptococcaceae</taxon>
        <taxon>Streptococcus</taxon>
    </lineage>
</organism>
<accession>C1CGD2</accession>
<comment type="function">
    <text evidence="1">Modulates RecA activity.</text>
</comment>
<comment type="subcellular location">
    <subcellularLocation>
        <location evidence="1">Cytoplasm</location>
    </subcellularLocation>
</comment>
<comment type="similarity">
    <text evidence="1">Belongs to the RecX family.</text>
</comment>
<gene>
    <name evidence="1" type="primary">recX</name>
    <name type="ordered locus">SPJ_1835</name>
</gene>
<proteinExistence type="inferred from homology"/>
<feature type="chain" id="PRO_1000164029" description="Regulatory protein RecX">
    <location>
        <begin position="1"/>
        <end position="258"/>
    </location>
</feature>
<reference key="1">
    <citation type="journal article" date="2010" name="Genome Biol.">
        <title>Structure and dynamics of the pan-genome of Streptococcus pneumoniae and closely related species.</title>
        <authorList>
            <person name="Donati C."/>
            <person name="Hiller N.L."/>
            <person name="Tettelin H."/>
            <person name="Muzzi A."/>
            <person name="Croucher N.J."/>
            <person name="Angiuoli S.V."/>
            <person name="Oggioni M."/>
            <person name="Dunning Hotopp J.C."/>
            <person name="Hu F.Z."/>
            <person name="Riley D.R."/>
            <person name="Covacci A."/>
            <person name="Mitchell T.J."/>
            <person name="Bentley S.D."/>
            <person name="Kilian M."/>
            <person name="Ehrlich G.D."/>
            <person name="Rappuoli R."/>
            <person name="Moxon E.R."/>
            <person name="Masignani V."/>
        </authorList>
    </citation>
    <scope>NUCLEOTIDE SEQUENCE [LARGE SCALE GENOMIC DNA]</scope>
    <source>
        <strain>JJA</strain>
    </source>
</reference>
<sequence>MKITKLEKKKRLYLMELDNGDKCYITEDTIVRFMLSRDKVISEEELKEIQDFAQFSYGKNLALYHLSFKARTEKEVREYLKKYDIDKNIVSQVIANLKEDKWINDGQYAYAIINTNQLSGDKGPYVLTQKLSQKGISKSTIEENLKEFDFSEVAQRVANKLLKKYEGKLPARALQDKIIQNLTNKGFSYSDAKIAFDDLDSQVDQETTQELIFKELDKQYTKYARKYEGYELKQRLTQVLARKGYDFSDIASALREYL</sequence>
<dbReference type="EMBL" id="CP000919">
    <property type="protein sequence ID" value="ACO19337.1"/>
    <property type="molecule type" value="Genomic_DNA"/>
</dbReference>
<dbReference type="RefSeq" id="WP_000705101.1">
    <property type="nucleotide sequence ID" value="NC_012466.1"/>
</dbReference>
<dbReference type="SMR" id="C1CGD2"/>
<dbReference type="KEGG" id="sjj:SPJ_1835"/>
<dbReference type="HOGENOM" id="CLU_066607_4_0_9"/>
<dbReference type="Proteomes" id="UP000002206">
    <property type="component" value="Chromosome"/>
</dbReference>
<dbReference type="GO" id="GO:0005737">
    <property type="term" value="C:cytoplasm"/>
    <property type="evidence" value="ECO:0007669"/>
    <property type="project" value="UniProtKB-SubCell"/>
</dbReference>
<dbReference type="GO" id="GO:0006282">
    <property type="term" value="P:regulation of DNA repair"/>
    <property type="evidence" value="ECO:0007669"/>
    <property type="project" value="UniProtKB-UniRule"/>
</dbReference>
<dbReference type="Gene3D" id="1.10.10.10">
    <property type="entry name" value="Winged helix-like DNA-binding domain superfamily/Winged helix DNA-binding domain"/>
    <property type="match status" value="4"/>
</dbReference>
<dbReference type="HAMAP" id="MF_01114">
    <property type="entry name" value="RecX"/>
    <property type="match status" value="1"/>
</dbReference>
<dbReference type="InterPro" id="IPR053926">
    <property type="entry name" value="RecX_HTH_1st"/>
</dbReference>
<dbReference type="InterPro" id="IPR053924">
    <property type="entry name" value="RecX_HTH_2nd"/>
</dbReference>
<dbReference type="InterPro" id="IPR053925">
    <property type="entry name" value="RecX_HTH_3rd"/>
</dbReference>
<dbReference type="InterPro" id="IPR003783">
    <property type="entry name" value="Regulatory_RecX"/>
</dbReference>
<dbReference type="InterPro" id="IPR036388">
    <property type="entry name" value="WH-like_DNA-bd_sf"/>
</dbReference>
<dbReference type="NCBIfam" id="NF010733">
    <property type="entry name" value="PRK14135.1"/>
    <property type="match status" value="1"/>
</dbReference>
<dbReference type="PANTHER" id="PTHR33602">
    <property type="entry name" value="REGULATORY PROTEIN RECX FAMILY PROTEIN"/>
    <property type="match status" value="1"/>
</dbReference>
<dbReference type="PANTHER" id="PTHR33602:SF1">
    <property type="entry name" value="REGULATORY PROTEIN RECX FAMILY PROTEIN"/>
    <property type="match status" value="1"/>
</dbReference>
<dbReference type="Pfam" id="PF21982">
    <property type="entry name" value="RecX_HTH1"/>
    <property type="match status" value="1"/>
</dbReference>
<dbReference type="Pfam" id="PF02631">
    <property type="entry name" value="RecX_HTH2"/>
    <property type="match status" value="1"/>
</dbReference>
<dbReference type="Pfam" id="PF21981">
    <property type="entry name" value="RecX_HTH3"/>
    <property type="match status" value="1"/>
</dbReference>
<evidence type="ECO:0000255" key="1">
    <source>
        <dbReference type="HAMAP-Rule" id="MF_01114"/>
    </source>
</evidence>
<name>RECX_STRZJ</name>
<keyword id="KW-0963">Cytoplasm</keyword>
<protein>
    <recommendedName>
        <fullName evidence="1">Regulatory protein RecX</fullName>
    </recommendedName>
</protein>